<accession>Q5RKL5</accession>
<accession>Q99P41</accession>
<protein>
    <recommendedName>
        <fullName>Metalloreductase STEAP3</fullName>
        <ecNumber>1.16.1.-</ecNumber>
    </recommendedName>
    <alternativeName>
        <fullName>Six-transmembrane epithelial antigen of prostate 3</fullName>
    </alternativeName>
    <alternativeName>
        <fullName>pHyde</fullName>
    </alternativeName>
</protein>
<name>STEA3_RAT</name>
<feature type="chain" id="PRO_0000285173" description="Metalloreductase STEAP3">
    <location>
        <begin position="1"/>
        <end position="488"/>
    </location>
</feature>
<feature type="topological domain" description="Cytoplasmic" evidence="4">
    <location>
        <begin position="1"/>
        <end position="207"/>
    </location>
</feature>
<feature type="transmembrane region" description="Helical" evidence="4">
    <location>
        <begin position="208"/>
        <end position="228"/>
    </location>
</feature>
<feature type="topological domain" description="Vesicular" evidence="4">
    <location>
        <begin position="229"/>
        <end position="258"/>
    </location>
</feature>
<feature type="transmembrane region" description="Helical" evidence="4">
    <location>
        <begin position="259"/>
        <end position="279"/>
    </location>
</feature>
<feature type="topological domain" description="Cytoplasmic" evidence="4">
    <location>
        <begin position="280"/>
        <end position="304"/>
    </location>
</feature>
<feature type="transmembrane region" description="Helical" evidence="4">
    <location>
        <begin position="305"/>
        <end position="325"/>
    </location>
</feature>
<feature type="topological domain" description="Vesicular" evidence="4">
    <location>
        <begin position="326"/>
        <end position="358"/>
    </location>
</feature>
<feature type="transmembrane region" description="Helical" evidence="4">
    <location>
        <begin position="359"/>
        <end position="379"/>
    </location>
</feature>
<feature type="topological domain" description="Cytoplasmic" evidence="4">
    <location>
        <begin position="380"/>
        <end position="390"/>
    </location>
</feature>
<feature type="transmembrane region" description="Helical" evidence="4">
    <location>
        <begin position="391"/>
        <end position="411"/>
    </location>
</feature>
<feature type="topological domain" description="Vesicular" evidence="4">
    <location>
        <begin position="412"/>
        <end position="433"/>
    </location>
</feature>
<feature type="transmembrane region" description="Helical" evidence="4">
    <location>
        <begin position="434"/>
        <end position="454"/>
    </location>
</feature>
<feature type="topological domain" description="Cytoplasmic" evidence="4">
    <location>
        <begin position="455"/>
        <end position="488"/>
    </location>
</feature>
<feature type="domain" description="Ferric oxidoreductase">
    <location>
        <begin position="259"/>
        <end position="407"/>
    </location>
</feature>
<feature type="binding site" evidence="1">
    <location>
        <begin position="36"/>
        <end position="39"/>
    </location>
    <ligand>
        <name>NADP(+)</name>
        <dbReference type="ChEBI" id="CHEBI:58349"/>
    </ligand>
</feature>
<feature type="binding site" evidence="1">
    <location>
        <begin position="58"/>
        <end position="59"/>
    </location>
    <ligand>
        <name>NADP(+)</name>
        <dbReference type="ChEBI" id="CHEBI:58349"/>
    </ligand>
</feature>
<feature type="binding site" evidence="1">
    <location>
        <begin position="91"/>
        <end position="98"/>
    </location>
    <ligand>
        <name>NADP(+)</name>
        <dbReference type="ChEBI" id="CHEBI:58349"/>
    </ligand>
</feature>
<feature type="binding site" evidence="1">
    <location>
        <position position="116"/>
    </location>
    <ligand>
        <name>NADP(+)</name>
        <dbReference type="ChEBI" id="CHEBI:58349"/>
    </ligand>
</feature>
<feature type="binding site" evidence="1">
    <location>
        <position position="151"/>
    </location>
    <ligand>
        <name>NADP(+)</name>
        <dbReference type="ChEBI" id="CHEBI:58349"/>
    </ligand>
</feature>
<feature type="binding site" evidence="2">
    <location>
        <position position="152"/>
    </location>
    <ligand>
        <name>FAD</name>
        <dbReference type="ChEBI" id="CHEBI:57692"/>
    </ligand>
</feature>
<feature type="binding site" evidence="2">
    <location>
        <position position="160"/>
    </location>
    <ligand>
        <name>FAD</name>
        <dbReference type="ChEBI" id="CHEBI:57692"/>
    </ligand>
</feature>
<feature type="binding site" evidence="1">
    <location>
        <position position="229"/>
    </location>
    <ligand>
        <name>Fe(3+)</name>
        <dbReference type="ChEBI" id="CHEBI:29034"/>
    </ligand>
</feature>
<feature type="binding site" evidence="2">
    <location>
        <position position="281"/>
    </location>
    <ligand>
        <name>FAD</name>
        <dbReference type="ChEBI" id="CHEBI:57692"/>
    </ligand>
</feature>
<feature type="binding site" evidence="1">
    <location>
        <position position="302"/>
    </location>
    <ligand>
        <name>FAD</name>
        <dbReference type="ChEBI" id="CHEBI:57692"/>
    </ligand>
</feature>
<feature type="binding site" evidence="1">
    <location>
        <position position="303"/>
    </location>
    <ligand>
        <name>FAD</name>
        <dbReference type="ChEBI" id="CHEBI:57692"/>
    </ligand>
</feature>
<feature type="binding site" description="axial binding residue" evidence="2">
    <location>
        <position position="316"/>
    </location>
    <ligand>
        <name>heme b</name>
        <dbReference type="ChEBI" id="CHEBI:60344"/>
    </ligand>
    <ligandPart>
        <name>Fe</name>
        <dbReference type="ChEBI" id="CHEBI:18248"/>
    </ligandPart>
</feature>
<feature type="binding site" evidence="1">
    <location>
        <position position="319"/>
    </location>
    <ligand>
        <name>Fe(3+)</name>
        <dbReference type="ChEBI" id="CHEBI:29034"/>
    </ligand>
</feature>
<feature type="binding site" evidence="2">
    <location>
        <position position="378"/>
    </location>
    <ligand>
        <name>FAD</name>
        <dbReference type="ChEBI" id="CHEBI:57692"/>
    </ligand>
</feature>
<feature type="binding site" evidence="2">
    <location>
        <position position="395"/>
    </location>
    <ligand>
        <name>FAD</name>
        <dbReference type="ChEBI" id="CHEBI:57692"/>
    </ligand>
</feature>
<feature type="binding site" description="axial binding residue" evidence="2">
    <location>
        <position position="409"/>
    </location>
    <ligand>
        <name>heme b</name>
        <dbReference type="ChEBI" id="CHEBI:60344"/>
    </ligand>
    <ligandPart>
        <name>Fe</name>
        <dbReference type="ChEBI" id="CHEBI:18248"/>
    </ligandPart>
</feature>
<feature type="site" description="Cleavage; by RHBDL4/RHBDD1" evidence="1">
    <location>
        <begin position="325"/>
        <end position="326"/>
    </location>
</feature>
<feature type="modified residue" description="Phosphoserine" evidence="1">
    <location>
        <position position="11"/>
    </location>
</feature>
<feature type="modified residue" description="Phosphoserine" evidence="7">
    <location>
        <position position="17"/>
    </location>
</feature>
<feature type="modified residue" description="Phosphoserine" evidence="7">
    <location>
        <position position="20"/>
    </location>
</feature>
<feature type="modified residue" description="Phosphoserine" evidence="1">
    <location>
        <position position="486"/>
    </location>
</feature>
<feature type="glycosylation site" description="N-linked (GlcNAc...) asparagine" evidence="4">
    <location>
        <position position="256"/>
    </location>
</feature>
<feature type="sequence conflict" description="In Ref. 1; AAL78207/AAK00361." evidence="6" ref="1">
    <original>S</original>
    <variation>F</variation>
    <location>
        <position position="53"/>
    </location>
</feature>
<feature type="sequence conflict" description="In Ref. 1; AAL78207/AAK00361." evidence="6" ref="1">
    <original>FVCF</original>
    <variation>STQS</variation>
    <location>
        <begin position="223"/>
        <end position="226"/>
    </location>
</feature>
<feature type="sequence conflict" description="In Ref. 1; AAL78207/AAK00361." evidence="6" ref="1">
    <original>L</original>
    <variation>I</variation>
    <location>
        <position position="259"/>
    </location>
</feature>
<gene>
    <name type="primary">Steap3</name>
</gene>
<comment type="function">
    <text evidence="1 2 3 5">Integral membrane protein that functions as a NADPH-dependent ferric-chelate reductase, using NADPH from one side of the membrane to reduce a Fe(3+) chelate that is bound on the other side of the membrane (By similarity). Mediates sequential transmembrane electron transfer from NADPH to FAD and onto heme, and finally to the Fe(3+) chelate (By similarity). Can also reduce Cu(2+) to Cu(1+) (By similarity). Mediates efficient transferrin-dependent iron uptake in erythroid cells (By similarity). May play a role downstream of p53/TP53 to interface apoptosis and cell cycle progression (PubMed:11593405). Indirectly involved in exosome secretion by facilitating the secretion of proteins such as TCTP (By similarity).</text>
</comment>
<comment type="catalytic activity">
    <reaction evidence="3">
        <text>2 Fe(2+) + NADP(+) + H(+) = 2 Fe(3+) + NADPH</text>
        <dbReference type="Rhea" id="RHEA:71767"/>
        <dbReference type="ChEBI" id="CHEBI:15378"/>
        <dbReference type="ChEBI" id="CHEBI:29033"/>
        <dbReference type="ChEBI" id="CHEBI:29034"/>
        <dbReference type="ChEBI" id="CHEBI:57783"/>
        <dbReference type="ChEBI" id="CHEBI:58349"/>
    </reaction>
    <physiologicalReaction direction="right-to-left" evidence="3">
        <dbReference type="Rhea" id="RHEA:71769"/>
    </physiologicalReaction>
</comment>
<comment type="catalytic activity">
    <reaction evidence="3">
        <text>2 Cu(+) + NADP(+) + H(+) = 2 Cu(2+) + NADPH</text>
        <dbReference type="Rhea" id="RHEA:71771"/>
        <dbReference type="ChEBI" id="CHEBI:15378"/>
        <dbReference type="ChEBI" id="CHEBI:29036"/>
        <dbReference type="ChEBI" id="CHEBI:49552"/>
        <dbReference type="ChEBI" id="CHEBI:57783"/>
        <dbReference type="ChEBI" id="CHEBI:58349"/>
    </reaction>
    <physiologicalReaction direction="right-to-left" evidence="3">
        <dbReference type="Rhea" id="RHEA:71773"/>
    </physiologicalReaction>
</comment>
<comment type="cofactor">
    <cofactor evidence="1">
        <name>FAD</name>
        <dbReference type="ChEBI" id="CHEBI:57692"/>
    </cofactor>
</comment>
<comment type="cofactor">
    <cofactor evidence="1">
        <name>heme b</name>
        <dbReference type="ChEBI" id="CHEBI:60344"/>
    </cofactor>
</comment>
<comment type="subunit">
    <text evidence="1">Homodimer. Interacts with BNIP3L, MYT1, RHBDL4/RHBDD1 and TCTP (By similarity).</text>
</comment>
<comment type="subcellular location">
    <subcellularLocation>
        <location evidence="3">Endosome membrane</location>
        <topology evidence="4">Multi-pass membrane protein</topology>
    </subcellularLocation>
</comment>
<comment type="PTM">
    <text evidence="1">Proteolytically cleaved by RHBDL4/RHBDD1. RHBDL4/RHBDD1-induced cleavage occurs at multiple sites in a glycosylation-independent manner (By similarity).</text>
</comment>
<comment type="PTM">
    <text evidence="1">Glycosylated.</text>
</comment>
<comment type="similarity">
    <text evidence="6">Belongs to the STEAP family.</text>
</comment>
<dbReference type="EC" id="1.16.1.-"/>
<dbReference type="EMBL" id="AF335281">
    <property type="protein sequence ID" value="AAK00361.1"/>
    <property type="molecule type" value="mRNA"/>
</dbReference>
<dbReference type="EMBL" id="AF238865">
    <property type="protein sequence ID" value="AAL78207.1"/>
    <property type="molecule type" value="mRNA"/>
</dbReference>
<dbReference type="EMBL" id="BC085696">
    <property type="protein sequence ID" value="AAH85696.1"/>
    <property type="molecule type" value="mRNA"/>
</dbReference>
<dbReference type="RefSeq" id="NP_579848.2">
    <property type="nucleotide sequence ID" value="NM_133314.2"/>
</dbReference>
<dbReference type="RefSeq" id="XP_063128055.1">
    <property type="nucleotide sequence ID" value="XM_063271985.1"/>
</dbReference>
<dbReference type="SMR" id="Q5RKL5"/>
<dbReference type="FunCoup" id="Q5RKL5">
    <property type="interactions" value="118"/>
</dbReference>
<dbReference type="STRING" id="10116.ENSRNOP00000064137"/>
<dbReference type="GlyCosmos" id="Q5RKL5">
    <property type="glycosylation" value="1 site, No reported glycans"/>
</dbReference>
<dbReference type="GlyGen" id="Q5RKL5">
    <property type="glycosylation" value="1 site"/>
</dbReference>
<dbReference type="iPTMnet" id="Q5RKL5"/>
<dbReference type="PhosphoSitePlus" id="Q5RKL5"/>
<dbReference type="SwissPalm" id="Q5RKL5"/>
<dbReference type="PaxDb" id="10116-ENSRNOP00000064137"/>
<dbReference type="Ensembl" id="ENSRNOT00000104769.1">
    <property type="protein sequence ID" value="ENSRNOP00000086517.1"/>
    <property type="gene ID" value="ENSRNOG00000049471.3"/>
</dbReference>
<dbReference type="GeneID" id="170824"/>
<dbReference type="KEGG" id="rno:170824"/>
<dbReference type="AGR" id="RGD:708552"/>
<dbReference type="CTD" id="55240"/>
<dbReference type="RGD" id="708552">
    <property type="gene designation" value="Steap3"/>
</dbReference>
<dbReference type="eggNOG" id="ENOG502QRP3">
    <property type="taxonomic scope" value="Eukaryota"/>
</dbReference>
<dbReference type="GeneTree" id="ENSGT00390000008042"/>
<dbReference type="HOGENOM" id="CLU_034618_1_1_1"/>
<dbReference type="InParanoid" id="Q5RKL5"/>
<dbReference type="PhylomeDB" id="Q5RKL5"/>
<dbReference type="Reactome" id="R-RNO-6803204">
    <property type="pathway name" value="TP53 Regulates Transcription of Genes Involved in Cytochrome C Release"/>
</dbReference>
<dbReference type="Reactome" id="R-RNO-9013405">
    <property type="pathway name" value="RHOD GTPase cycle"/>
</dbReference>
<dbReference type="Reactome" id="R-RNO-9013406">
    <property type="pathway name" value="RHOQ GTPase cycle"/>
</dbReference>
<dbReference type="Reactome" id="R-RNO-9035034">
    <property type="pathway name" value="RHOF GTPase cycle"/>
</dbReference>
<dbReference type="Reactome" id="R-RNO-917977">
    <property type="pathway name" value="Transferrin endocytosis and recycling"/>
</dbReference>
<dbReference type="PRO" id="PR:Q5RKL5"/>
<dbReference type="Proteomes" id="UP000002494">
    <property type="component" value="Chromosome 13"/>
</dbReference>
<dbReference type="GO" id="GO:0005737">
    <property type="term" value="C:cytoplasm"/>
    <property type="evidence" value="ECO:0000266"/>
    <property type="project" value="RGD"/>
</dbReference>
<dbReference type="GO" id="GO:0005768">
    <property type="term" value="C:endosome"/>
    <property type="evidence" value="ECO:0000266"/>
    <property type="project" value="RGD"/>
</dbReference>
<dbReference type="GO" id="GO:0010008">
    <property type="term" value="C:endosome membrane"/>
    <property type="evidence" value="ECO:0000250"/>
    <property type="project" value="UniProtKB"/>
</dbReference>
<dbReference type="GO" id="GO:0005771">
    <property type="term" value="C:multivesicular body"/>
    <property type="evidence" value="ECO:0000266"/>
    <property type="project" value="RGD"/>
</dbReference>
<dbReference type="GO" id="GO:0005886">
    <property type="term" value="C:plasma membrane"/>
    <property type="evidence" value="ECO:0000266"/>
    <property type="project" value="RGD"/>
</dbReference>
<dbReference type="GO" id="GO:0008823">
    <property type="term" value="F:cupric reductase (NADH) activity"/>
    <property type="evidence" value="ECO:0000266"/>
    <property type="project" value="RGD"/>
</dbReference>
<dbReference type="GO" id="GO:0071949">
    <property type="term" value="F:FAD binding"/>
    <property type="evidence" value="ECO:0000250"/>
    <property type="project" value="UniProtKB"/>
</dbReference>
<dbReference type="GO" id="GO:0052851">
    <property type="term" value="F:ferric-chelate reductase (NADPH) activity"/>
    <property type="evidence" value="ECO:0000250"/>
    <property type="project" value="UniProtKB"/>
</dbReference>
<dbReference type="GO" id="GO:0000293">
    <property type="term" value="F:ferric-chelate reductase activity"/>
    <property type="evidence" value="ECO:0000266"/>
    <property type="project" value="RGD"/>
</dbReference>
<dbReference type="GO" id="GO:0020037">
    <property type="term" value="F:heme binding"/>
    <property type="evidence" value="ECO:0000250"/>
    <property type="project" value="UniProtKB"/>
</dbReference>
<dbReference type="GO" id="GO:0046872">
    <property type="term" value="F:metal ion binding"/>
    <property type="evidence" value="ECO:0007669"/>
    <property type="project" value="UniProtKB-KW"/>
</dbReference>
<dbReference type="GO" id="GO:0006915">
    <property type="term" value="P:apoptotic process"/>
    <property type="evidence" value="ECO:0007669"/>
    <property type="project" value="UniProtKB-KW"/>
</dbReference>
<dbReference type="GO" id="GO:0015677">
    <property type="term" value="P:copper ion import"/>
    <property type="evidence" value="ECO:0000266"/>
    <property type="project" value="RGD"/>
</dbReference>
<dbReference type="GO" id="GO:0051649">
    <property type="term" value="P:establishment of localization in cell"/>
    <property type="evidence" value="ECO:0000266"/>
    <property type="project" value="RGD"/>
</dbReference>
<dbReference type="GO" id="GO:1990182">
    <property type="term" value="P:exosomal secretion"/>
    <property type="evidence" value="ECO:0000266"/>
    <property type="project" value="RGD"/>
</dbReference>
<dbReference type="GO" id="GO:0033212">
    <property type="term" value="P:iron import into cell"/>
    <property type="evidence" value="ECO:0000266"/>
    <property type="project" value="RGD"/>
</dbReference>
<dbReference type="GO" id="GO:0006826">
    <property type="term" value="P:iron ion transport"/>
    <property type="evidence" value="ECO:0000266"/>
    <property type="project" value="RGD"/>
</dbReference>
<dbReference type="GO" id="GO:0043065">
    <property type="term" value="P:positive regulation of apoptotic process"/>
    <property type="evidence" value="ECO:0000314"/>
    <property type="project" value="RGD"/>
</dbReference>
<dbReference type="GO" id="GO:1902167">
    <property type="term" value="P:positive regulation of intrinsic apoptotic signaling pathway in response to DNA damage by p53 class mediator"/>
    <property type="evidence" value="ECO:0000266"/>
    <property type="project" value="RGD"/>
</dbReference>
<dbReference type="GO" id="GO:0009306">
    <property type="term" value="P:protein secretion"/>
    <property type="evidence" value="ECO:0000250"/>
    <property type="project" value="UniProtKB"/>
</dbReference>
<dbReference type="FunFam" id="3.40.50.720:FF:000051">
    <property type="entry name" value="STEAP2 metalloreductase"/>
    <property type="match status" value="1"/>
</dbReference>
<dbReference type="Gene3D" id="3.40.50.720">
    <property type="entry name" value="NAD(P)-binding Rossmann-like Domain"/>
    <property type="match status" value="1"/>
</dbReference>
<dbReference type="InterPro" id="IPR013130">
    <property type="entry name" value="Fe3_Rdtase_TM_dom"/>
</dbReference>
<dbReference type="InterPro" id="IPR036291">
    <property type="entry name" value="NAD(P)-bd_dom_sf"/>
</dbReference>
<dbReference type="InterPro" id="IPR028939">
    <property type="entry name" value="P5C_Rdtase_cat_N"/>
</dbReference>
<dbReference type="InterPro" id="IPR051267">
    <property type="entry name" value="STEAP_metalloreductase"/>
</dbReference>
<dbReference type="PANTHER" id="PTHR14239">
    <property type="entry name" value="DUDULIN-RELATED"/>
    <property type="match status" value="1"/>
</dbReference>
<dbReference type="PANTHER" id="PTHR14239:SF8">
    <property type="entry name" value="METALLOREDUCTASE STEAP3"/>
    <property type="match status" value="1"/>
</dbReference>
<dbReference type="Pfam" id="PF03807">
    <property type="entry name" value="F420_oxidored"/>
    <property type="match status" value="1"/>
</dbReference>
<dbReference type="Pfam" id="PF01794">
    <property type="entry name" value="Ferric_reduct"/>
    <property type="match status" value="1"/>
</dbReference>
<dbReference type="SUPFAM" id="SSF51735">
    <property type="entry name" value="NAD(P)-binding Rossmann-fold domains"/>
    <property type="match status" value="1"/>
</dbReference>
<proteinExistence type="evidence at protein level"/>
<organism>
    <name type="scientific">Rattus norvegicus</name>
    <name type="common">Rat</name>
    <dbReference type="NCBI Taxonomy" id="10116"/>
    <lineage>
        <taxon>Eukaryota</taxon>
        <taxon>Metazoa</taxon>
        <taxon>Chordata</taxon>
        <taxon>Craniata</taxon>
        <taxon>Vertebrata</taxon>
        <taxon>Euteleostomi</taxon>
        <taxon>Mammalia</taxon>
        <taxon>Eutheria</taxon>
        <taxon>Euarchontoglires</taxon>
        <taxon>Glires</taxon>
        <taxon>Rodentia</taxon>
        <taxon>Myomorpha</taxon>
        <taxon>Muroidea</taxon>
        <taxon>Muridae</taxon>
        <taxon>Murinae</taxon>
        <taxon>Rattus</taxon>
    </lineage>
</organism>
<keyword id="KW-0053">Apoptosis</keyword>
<keyword id="KW-0131">Cell cycle</keyword>
<keyword id="KW-0186">Copper</keyword>
<keyword id="KW-0967">Endosome</keyword>
<keyword id="KW-0274">FAD</keyword>
<keyword id="KW-0285">Flavoprotein</keyword>
<keyword id="KW-0325">Glycoprotein</keyword>
<keyword id="KW-0349">Heme</keyword>
<keyword id="KW-0406">Ion transport</keyword>
<keyword id="KW-0408">Iron</keyword>
<keyword id="KW-0410">Iron transport</keyword>
<keyword id="KW-0472">Membrane</keyword>
<keyword id="KW-0479">Metal-binding</keyword>
<keyword id="KW-0521">NADP</keyword>
<keyword id="KW-0560">Oxidoreductase</keyword>
<keyword id="KW-0597">Phosphoprotein</keyword>
<keyword id="KW-1185">Reference proteome</keyword>
<keyword id="KW-0812">Transmembrane</keyword>
<keyword id="KW-1133">Transmembrane helix</keyword>
<keyword id="KW-0813">Transport</keyword>
<evidence type="ECO:0000250" key="1">
    <source>
        <dbReference type="UniProtKB" id="Q658P3"/>
    </source>
</evidence>
<evidence type="ECO:0000250" key="2">
    <source>
        <dbReference type="UniProtKB" id="Q687X5"/>
    </source>
</evidence>
<evidence type="ECO:0000250" key="3">
    <source>
        <dbReference type="UniProtKB" id="Q8CI59"/>
    </source>
</evidence>
<evidence type="ECO:0000255" key="4"/>
<evidence type="ECO:0000269" key="5">
    <source>
    </source>
</evidence>
<evidence type="ECO:0000305" key="6"/>
<evidence type="ECO:0007744" key="7">
    <source>
    </source>
</evidence>
<sequence>MSGEMDKPLISRRLVDSDGSLAEVPKEAPKVGILGSGDFARSLATRLVGSGFSVVVGSRNPKRTAGLFPSLAQVTFQEEAVSSPEVIFVAVFREHYSSLCSLADQLAGKILVDVSNPTEKERLQHRQSNAEYLASLFPACTVVKAFNVISAWALQAGPRDGNRQVLICGDQLEAKHTVSEMARAMGFTPLDMGSLASAREVEAIPLRLLPSWKVPTLLALGLFVCFYAYNFIRDVLQPYIRKDENKFYKMPLSVVNTTLPCVAYVLLSLVYLPGVLAAALQLRRGTKYQRFPDWLDHWLQHRKQIGLLSFFFAMLHALYSFCLPLRRSHRYDLVNLAVKQVLANKSRLWVEEEVWRMEIYLSLGVLALGMLSLLAVTSIPSIANSLNWKEFSFVQSTLGFVALMLSTMHTLTYGWTRAFEENHYKFYLPPTFTLTLLLPCVIILAKGLFLLPCLSHRLTKIRRGWERDGAVKFMLPAGHTQGEKTSHV</sequence>
<reference key="1">
    <citation type="journal article" date="2000" name="Cancer Res.">
        <title>Growth inhibition of prostate cancer by an adenovirus expressing a novel tumor suppressor gene, pHyde.</title>
        <authorList>
            <person name="Steiner M.S."/>
            <person name="Zhang X."/>
            <person name="Wang Y."/>
            <person name="Lu Y."/>
        </authorList>
    </citation>
    <scope>NUCLEOTIDE SEQUENCE [MRNA]</scope>
    <source>
        <tissue>Prostatic carcinoma</tissue>
    </source>
</reference>
<reference key="2">
    <citation type="journal article" date="2004" name="Genome Res.">
        <title>The status, quality, and expansion of the NIH full-length cDNA project: the Mammalian Gene Collection (MGC).</title>
        <authorList>
            <consortium name="The MGC Project Team"/>
        </authorList>
    </citation>
    <scope>NUCLEOTIDE SEQUENCE [LARGE SCALE MRNA]</scope>
    <source>
        <tissue>Heart</tissue>
    </source>
</reference>
<reference key="3">
    <citation type="journal article" date="2001" name="Oncogene">
        <title>Apoptosis induction in prostate cancer cells by a novel gene product, pHyde, involves caspase-3.</title>
        <authorList>
            <person name="Zhang X."/>
            <person name="Steiner M.S."/>
            <person name="Rinaldy A."/>
            <person name="Lu Y."/>
        </authorList>
    </citation>
    <scope>POSSIBLE FUNCTION</scope>
</reference>
<reference key="4">
    <citation type="journal article" date="2012" name="Nat. Commun.">
        <title>Quantitative maps of protein phosphorylation sites across 14 different rat organs and tissues.</title>
        <authorList>
            <person name="Lundby A."/>
            <person name="Secher A."/>
            <person name="Lage K."/>
            <person name="Nordsborg N.B."/>
            <person name="Dmytriyev A."/>
            <person name="Lundby C."/>
            <person name="Olsen J.V."/>
        </authorList>
    </citation>
    <scope>PHOSPHORYLATION [LARGE SCALE ANALYSIS] AT SER-17 AND SER-20</scope>
    <scope>IDENTIFICATION BY MASS SPECTROMETRY [LARGE SCALE ANALYSIS]</scope>
</reference>